<gene>
    <name evidence="1" type="primary">leuS</name>
    <name type="ordered locus">XAC2781</name>
</gene>
<organism>
    <name type="scientific">Xanthomonas axonopodis pv. citri (strain 306)</name>
    <dbReference type="NCBI Taxonomy" id="190486"/>
    <lineage>
        <taxon>Bacteria</taxon>
        <taxon>Pseudomonadati</taxon>
        <taxon>Pseudomonadota</taxon>
        <taxon>Gammaproteobacteria</taxon>
        <taxon>Lysobacterales</taxon>
        <taxon>Lysobacteraceae</taxon>
        <taxon>Xanthomonas</taxon>
    </lineage>
</organism>
<accession>Q8PIW4</accession>
<proteinExistence type="inferred from homology"/>
<keyword id="KW-0030">Aminoacyl-tRNA synthetase</keyword>
<keyword id="KW-0067">ATP-binding</keyword>
<keyword id="KW-0963">Cytoplasm</keyword>
<keyword id="KW-0436">Ligase</keyword>
<keyword id="KW-0547">Nucleotide-binding</keyword>
<keyword id="KW-0648">Protein biosynthesis</keyword>
<dbReference type="EC" id="6.1.1.4" evidence="1"/>
<dbReference type="EMBL" id="AE008923">
    <property type="protein sequence ID" value="AAM37626.1"/>
    <property type="molecule type" value="Genomic_DNA"/>
</dbReference>
<dbReference type="RefSeq" id="WP_011051821.1">
    <property type="nucleotide sequence ID" value="NC_003919.1"/>
</dbReference>
<dbReference type="SMR" id="Q8PIW4"/>
<dbReference type="GeneID" id="66911870"/>
<dbReference type="KEGG" id="xac:XAC2781"/>
<dbReference type="eggNOG" id="COG0495">
    <property type="taxonomic scope" value="Bacteria"/>
</dbReference>
<dbReference type="HOGENOM" id="CLU_004427_0_0_6"/>
<dbReference type="Proteomes" id="UP000000576">
    <property type="component" value="Chromosome"/>
</dbReference>
<dbReference type="GO" id="GO:0005829">
    <property type="term" value="C:cytosol"/>
    <property type="evidence" value="ECO:0007669"/>
    <property type="project" value="TreeGrafter"/>
</dbReference>
<dbReference type="GO" id="GO:0002161">
    <property type="term" value="F:aminoacyl-tRNA deacylase activity"/>
    <property type="evidence" value="ECO:0007669"/>
    <property type="project" value="InterPro"/>
</dbReference>
<dbReference type="GO" id="GO:0005524">
    <property type="term" value="F:ATP binding"/>
    <property type="evidence" value="ECO:0007669"/>
    <property type="project" value="UniProtKB-UniRule"/>
</dbReference>
<dbReference type="GO" id="GO:0004823">
    <property type="term" value="F:leucine-tRNA ligase activity"/>
    <property type="evidence" value="ECO:0007669"/>
    <property type="project" value="UniProtKB-UniRule"/>
</dbReference>
<dbReference type="GO" id="GO:0006429">
    <property type="term" value="P:leucyl-tRNA aminoacylation"/>
    <property type="evidence" value="ECO:0007669"/>
    <property type="project" value="UniProtKB-UniRule"/>
</dbReference>
<dbReference type="CDD" id="cd07958">
    <property type="entry name" value="Anticodon_Ia_Leu_BEm"/>
    <property type="match status" value="1"/>
</dbReference>
<dbReference type="CDD" id="cd00812">
    <property type="entry name" value="LeuRS_core"/>
    <property type="match status" value="1"/>
</dbReference>
<dbReference type="FunFam" id="1.10.730.10:FF:000003">
    <property type="entry name" value="Leucine--tRNA ligase"/>
    <property type="match status" value="1"/>
</dbReference>
<dbReference type="FunFam" id="2.20.28.290:FF:000001">
    <property type="entry name" value="Leucine--tRNA ligase"/>
    <property type="match status" value="1"/>
</dbReference>
<dbReference type="FunFam" id="3.10.20.590:FF:000001">
    <property type="entry name" value="Leucine--tRNA ligase"/>
    <property type="match status" value="1"/>
</dbReference>
<dbReference type="FunFam" id="3.40.50.620:FF:000003">
    <property type="entry name" value="Leucine--tRNA ligase"/>
    <property type="match status" value="1"/>
</dbReference>
<dbReference type="FunFam" id="3.40.50.620:FF:000124">
    <property type="entry name" value="Leucine--tRNA ligase"/>
    <property type="match status" value="1"/>
</dbReference>
<dbReference type="FunFam" id="3.90.740.10:FF:000012">
    <property type="entry name" value="Leucine--tRNA ligase"/>
    <property type="match status" value="1"/>
</dbReference>
<dbReference type="Gene3D" id="2.20.28.290">
    <property type="match status" value="1"/>
</dbReference>
<dbReference type="Gene3D" id="3.10.20.590">
    <property type="match status" value="1"/>
</dbReference>
<dbReference type="Gene3D" id="3.40.50.620">
    <property type="entry name" value="HUPs"/>
    <property type="match status" value="2"/>
</dbReference>
<dbReference type="Gene3D" id="1.10.730.10">
    <property type="entry name" value="Isoleucyl-tRNA Synthetase, Domain 1"/>
    <property type="match status" value="2"/>
</dbReference>
<dbReference type="Gene3D" id="3.90.740.10">
    <property type="entry name" value="Valyl/Leucyl/Isoleucyl-tRNA synthetase, editing domain"/>
    <property type="match status" value="1"/>
</dbReference>
<dbReference type="HAMAP" id="MF_00049_B">
    <property type="entry name" value="Leu_tRNA_synth_B"/>
    <property type="match status" value="1"/>
</dbReference>
<dbReference type="InterPro" id="IPR001412">
    <property type="entry name" value="aa-tRNA-synth_I_CS"/>
</dbReference>
<dbReference type="InterPro" id="IPR002300">
    <property type="entry name" value="aa-tRNA-synth_Ia"/>
</dbReference>
<dbReference type="InterPro" id="IPR002302">
    <property type="entry name" value="Leu-tRNA-ligase"/>
</dbReference>
<dbReference type="InterPro" id="IPR025709">
    <property type="entry name" value="Leu_tRNA-synth_edit"/>
</dbReference>
<dbReference type="InterPro" id="IPR013155">
    <property type="entry name" value="M/V/L/I-tRNA-synth_anticd-bd"/>
</dbReference>
<dbReference type="InterPro" id="IPR015413">
    <property type="entry name" value="Methionyl/Leucyl_tRNA_Synth"/>
</dbReference>
<dbReference type="InterPro" id="IPR014729">
    <property type="entry name" value="Rossmann-like_a/b/a_fold"/>
</dbReference>
<dbReference type="InterPro" id="IPR009080">
    <property type="entry name" value="tRNAsynth_Ia_anticodon-bd"/>
</dbReference>
<dbReference type="InterPro" id="IPR009008">
    <property type="entry name" value="Val/Leu/Ile-tRNA-synth_edit"/>
</dbReference>
<dbReference type="NCBIfam" id="TIGR00396">
    <property type="entry name" value="leuS_bact"/>
    <property type="match status" value="1"/>
</dbReference>
<dbReference type="PANTHER" id="PTHR43740:SF2">
    <property type="entry name" value="LEUCINE--TRNA LIGASE, MITOCHONDRIAL"/>
    <property type="match status" value="1"/>
</dbReference>
<dbReference type="PANTHER" id="PTHR43740">
    <property type="entry name" value="LEUCYL-TRNA SYNTHETASE"/>
    <property type="match status" value="1"/>
</dbReference>
<dbReference type="Pfam" id="PF08264">
    <property type="entry name" value="Anticodon_1"/>
    <property type="match status" value="1"/>
</dbReference>
<dbReference type="Pfam" id="PF00133">
    <property type="entry name" value="tRNA-synt_1"/>
    <property type="match status" value="2"/>
</dbReference>
<dbReference type="Pfam" id="PF13603">
    <property type="entry name" value="tRNA-synt_1_2"/>
    <property type="match status" value="1"/>
</dbReference>
<dbReference type="Pfam" id="PF09334">
    <property type="entry name" value="tRNA-synt_1g"/>
    <property type="match status" value="1"/>
</dbReference>
<dbReference type="PRINTS" id="PR00985">
    <property type="entry name" value="TRNASYNTHLEU"/>
</dbReference>
<dbReference type="SUPFAM" id="SSF47323">
    <property type="entry name" value="Anticodon-binding domain of a subclass of class I aminoacyl-tRNA synthetases"/>
    <property type="match status" value="1"/>
</dbReference>
<dbReference type="SUPFAM" id="SSF52374">
    <property type="entry name" value="Nucleotidylyl transferase"/>
    <property type="match status" value="1"/>
</dbReference>
<dbReference type="SUPFAM" id="SSF50677">
    <property type="entry name" value="ValRS/IleRS/LeuRS editing domain"/>
    <property type="match status" value="1"/>
</dbReference>
<dbReference type="PROSITE" id="PS00178">
    <property type="entry name" value="AA_TRNA_LIGASE_I"/>
    <property type="match status" value="1"/>
</dbReference>
<reference key="1">
    <citation type="journal article" date="2002" name="Nature">
        <title>Comparison of the genomes of two Xanthomonas pathogens with differing host specificities.</title>
        <authorList>
            <person name="da Silva A.C.R."/>
            <person name="Ferro J.A."/>
            <person name="Reinach F.C."/>
            <person name="Farah C.S."/>
            <person name="Furlan L.R."/>
            <person name="Quaggio R.B."/>
            <person name="Monteiro-Vitorello C.B."/>
            <person name="Van Sluys M.A."/>
            <person name="Almeida N.F. Jr."/>
            <person name="Alves L.M.C."/>
            <person name="do Amaral A.M."/>
            <person name="Bertolini M.C."/>
            <person name="Camargo L.E.A."/>
            <person name="Camarotte G."/>
            <person name="Cannavan F."/>
            <person name="Cardozo J."/>
            <person name="Chambergo F."/>
            <person name="Ciapina L.P."/>
            <person name="Cicarelli R.M.B."/>
            <person name="Coutinho L.L."/>
            <person name="Cursino-Santos J.R."/>
            <person name="El-Dorry H."/>
            <person name="Faria J.B."/>
            <person name="Ferreira A.J.S."/>
            <person name="Ferreira R.C.C."/>
            <person name="Ferro M.I.T."/>
            <person name="Formighieri E.F."/>
            <person name="Franco M.C."/>
            <person name="Greggio C.C."/>
            <person name="Gruber A."/>
            <person name="Katsuyama A.M."/>
            <person name="Kishi L.T."/>
            <person name="Leite R.P."/>
            <person name="Lemos E.G.M."/>
            <person name="Lemos M.V.F."/>
            <person name="Locali E.C."/>
            <person name="Machado M.A."/>
            <person name="Madeira A.M.B.N."/>
            <person name="Martinez-Rossi N.M."/>
            <person name="Martins E.C."/>
            <person name="Meidanis J."/>
            <person name="Menck C.F.M."/>
            <person name="Miyaki C.Y."/>
            <person name="Moon D.H."/>
            <person name="Moreira L.M."/>
            <person name="Novo M.T.M."/>
            <person name="Okura V.K."/>
            <person name="Oliveira M.C."/>
            <person name="Oliveira V.R."/>
            <person name="Pereira H.A."/>
            <person name="Rossi A."/>
            <person name="Sena J.A.D."/>
            <person name="Silva C."/>
            <person name="de Souza R.F."/>
            <person name="Spinola L.A.F."/>
            <person name="Takita M.A."/>
            <person name="Tamura R.E."/>
            <person name="Teixeira E.C."/>
            <person name="Tezza R.I.D."/>
            <person name="Trindade dos Santos M."/>
            <person name="Truffi D."/>
            <person name="Tsai S.M."/>
            <person name="White F.F."/>
            <person name="Setubal J.C."/>
            <person name="Kitajima J.P."/>
        </authorList>
    </citation>
    <scope>NUCLEOTIDE SEQUENCE [LARGE SCALE GENOMIC DNA]</scope>
    <source>
        <strain>306</strain>
    </source>
</reference>
<sequence>MSTVEPNVYDPQQVETSAQQFWDATRAFQVDENSEKPKFYCLSMLPYPSGALHMGHVRNYTISDVVSRYKRMTGHNVLQPMGWDAFGLPAENAAIKNKTAPAKWTYANIEHMRAQLKSLGYAIDWSREFATCTPDYYVHEQRMFTRLMRKGLAYRRNAVVNWDPIDQTVLANEQVIDGRGWRSGAVVEKREIPQWFLRITDYAQELLDGLDQLDGWPDSVKTMQRNWIGRSEGLEIQFDVRDPDGATLDPLRVFTTRPDTLMGVTFVSIAAEHPLALHAAKSNPELAALLETLKHGGVSEAELETQEKRGMATGLTAVHPISGEQVPVWVANFVLMGYGTGAVMAVPGHDQRDFEFANKYGLPIVQVVKLREPRNEEEQTWDATHWRDWYTDKSRELELINSAEFDGLDFGGAFEALAERFERKGQGQRRVNYRLRDWGVSRQRYWGCPIPVIYCAKCGAVPVPEDQLPVVLPENVEFSGTGSPIKTDPTWRQTTCPDCGGPAERETDTFDTFMESSWYVARYTSPKARDMVDRRANYWMPADLYVGGIEHAILHLMYFRFYHKLMRDARLVDSDEPVTNLLTQGMVIADTFYRDADNGGKDWINPADVEIQRDERGRVTGAVLIADGQPVQIGGTEKMSKSKNNGVDPQSMVAKYGADTVRLFSMFAAPPEQSLEWNEAGVDGMARFMRRLWAQVHKHVGEGTAVALDVAALSAEQKAIRRKTHETIGKVGDDYGRRHSFNTAIAAVMELSNALAKFDDASEQGRAVRQEALEAMVLLLNPITPHASHALWQVLGRGETLLENVAFPQADASALVRDALTLAVQINGKLRGTIDVAADATREQIEALAQAEPNAAKFLEGLSVRKIIIVPGKIVNIVAG</sequence>
<evidence type="ECO:0000255" key="1">
    <source>
        <dbReference type="HAMAP-Rule" id="MF_00049"/>
    </source>
</evidence>
<comment type="catalytic activity">
    <reaction evidence="1">
        <text>tRNA(Leu) + L-leucine + ATP = L-leucyl-tRNA(Leu) + AMP + diphosphate</text>
        <dbReference type="Rhea" id="RHEA:11688"/>
        <dbReference type="Rhea" id="RHEA-COMP:9613"/>
        <dbReference type="Rhea" id="RHEA-COMP:9622"/>
        <dbReference type="ChEBI" id="CHEBI:30616"/>
        <dbReference type="ChEBI" id="CHEBI:33019"/>
        <dbReference type="ChEBI" id="CHEBI:57427"/>
        <dbReference type="ChEBI" id="CHEBI:78442"/>
        <dbReference type="ChEBI" id="CHEBI:78494"/>
        <dbReference type="ChEBI" id="CHEBI:456215"/>
        <dbReference type="EC" id="6.1.1.4"/>
    </reaction>
</comment>
<comment type="subcellular location">
    <subcellularLocation>
        <location evidence="1">Cytoplasm</location>
    </subcellularLocation>
</comment>
<comment type="similarity">
    <text evidence="1">Belongs to the class-I aminoacyl-tRNA synthetase family.</text>
</comment>
<feature type="chain" id="PRO_0000152120" description="Leucine--tRNA ligase">
    <location>
        <begin position="1"/>
        <end position="880"/>
    </location>
</feature>
<feature type="short sequence motif" description="'HIGH' region">
    <location>
        <begin position="46"/>
        <end position="56"/>
    </location>
</feature>
<feature type="short sequence motif" description="'KMSKS' region">
    <location>
        <begin position="638"/>
        <end position="642"/>
    </location>
</feature>
<feature type="binding site" evidence="1">
    <location>
        <position position="641"/>
    </location>
    <ligand>
        <name>ATP</name>
        <dbReference type="ChEBI" id="CHEBI:30616"/>
    </ligand>
</feature>
<name>SYL_XANAC</name>
<protein>
    <recommendedName>
        <fullName evidence="1">Leucine--tRNA ligase</fullName>
        <ecNumber evidence="1">6.1.1.4</ecNumber>
    </recommendedName>
    <alternativeName>
        <fullName evidence="1">Leucyl-tRNA synthetase</fullName>
        <shortName evidence="1">LeuRS</shortName>
    </alternativeName>
</protein>